<protein>
    <recommendedName>
        <fullName evidence="1">Holliday junction branch migration complex subunit RuvA</fullName>
    </recommendedName>
</protein>
<proteinExistence type="inferred from homology"/>
<sequence>MYEYIKGKYIDMYKDYIVIENNNIGYKIYTSGSTMAKLPSIGENIMLYTEQIVREDFIGVYGFLTKDELSMFKLLLTINGVGAKAALSLLSISNVSTLKYAIKMGDEKTITRAPGIGKKTAQRIILELKDKIEIDILEEDDEQIINKVADDKKVLEAVAALVTLGYSEKEANKVINSCDKNNSLEQIIKEALKYLMK</sequence>
<reference key="1">
    <citation type="journal article" date="2007" name="PLoS ONE">
        <title>Analysis of the neurotoxin complex genes in Clostridium botulinum A1-A4 and B1 strains: BoNT/A3, /Ba4 and /B1 clusters are located within plasmids.</title>
        <authorList>
            <person name="Smith T.J."/>
            <person name="Hill K.K."/>
            <person name="Foley B.T."/>
            <person name="Detter J.C."/>
            <person name="Munk A.C."/>
            <person name="Bruce D.C."/>
            <person name="Doggett N.A."/>
            <person name="Smith L.A."/>
            <person name="Marks J.D."/>
            <person name="Xie G."/>
            <person name="Brettin T.S."/>
        </authorList>
    </citation>
    <scope>NUCLEOTIDE SEQUENCE [LARGE SCALE GENOMIC DNA]</scope>
    <source>
        <strain>ATCC 19397 / Type A</strain>
    </source>
</reference>
<feature type="chain" id="PRO_1000002430" description="Holliday junction branch migration complex subunit RuvA">
    <location>
        <begin position="1"/>
        <end position="197"/>
    </location>
</feature>
<feature type="region of interest" description="Domain I" evidence="1">
    <location>
        <begin position="1"/>
        <end position="64"/>
    </location>
</feature>
<feature type="region of interest" description="Domain II" evidence="1">
    <location>
        <begin position="65"/>
        <end position="144"/>
    </location>
</feature>
<feature type="region of interest" description="Flexible linker" evidence="1">
    <location>
        <begin position="145"/>
        <end position="149"/>
    </location>
</feature>
<feature type="region of interest" description="Domain III" evidence="1">
    <location>
        <begin position="149"/>
        <end position="197"/>
    </location>
</feature>
<comment type="function">
    <text evidence="1">The RuvA-RuvB-RuvC complex processes Holliday junction (HJ) DNA during genetic recombination and DNA repair, while the RuvA-RuvB complex plays an important role in the rescue of blocked DNA replication forks via replication fork reversal (RFR). RuvA specifically binds to HJ cruciform DNA, conferring on it an open structure. The RuvB hexamer acts as an ATP-dependent pump, pulling dsDNA into and through the RuvAB complex. HJ branch migration allows RuvC to scan DNA until it finds its consensus sequence, where it cleaves and resolves the cruciform DNA.</text>
</comment>
<comment type="subunit">
    <text evidence="1">Homotetramer. Forms an RuvA(8)-RuvB(12)-Holliday junction (HJ) complex. HJ DNA is sandwiched between 2 RuvA tetramers; dsDNA enters through RuvA and exits via RuvB. An RuvB hexamer assembles on each DNA strand where it exits the tetramer. Each RuvB hexamer is contacted by two RuvA subunits (via domain III) on 2 adjacent RuvB subunits; this complex drives branch migration. In the full resolvosome a probable DNA-RuvA(4)-RuvB(12)-RuvC(2) complex forms which resolves the HJ.</text>
</comment>
<comment type="subcellular location">
    <subcellularLocation>
        <location evidence="1">Cytoplasm</location>
    </subcellularLocation>
</comment>
<comment type="domain">
    <text evidence="1">Has three domains with a flexible linker between the domains II and III and assumes an 'L' shape. Domain III is highly mobile and contacts RuvB.</text>
</comment>
<comment type="similarity">
    <text evidence="1">Belongs to the RuvA family.</text>
</comment>
<keyword id="KW-0963">Cytoplasm</keyword>
<keyword id="KW-0227">DNA damage</keyword>
<keyword id="KW-0233">DNA recombination</keyword>
<keyword id="KW-0234">DNA repair</keyword>
<keyword id="KW-0238">DNA-binding</keyword>
<dbReference type="EMBL" id="CP000726">
    <property type="protein sequence ID" value="ABS33329.1"/>
    <property type="molecule type" value="Genomic_DNA"/>
</dbReference>
<dbReference type="RefSeq" id="WP_012048089.1">
    <property type="nucleotide sequence ID" value="NC_009697.1"/>
</dbReference>
<dbReference type="SMR" id="A7FY20"/>
<dbReference type="GeneID" id="5187366"/>
<dbReference type="KEGG" id="cba:CLB_3100"/>
<dbReference type="HOGENOM" id="CLU_087936_3_0_9"/>
<dbReference type="GO" id="GO:0005737">
    <property type="term" value="C:cytoplasm"/>
    <property type="evidence" value="ECO:0007669"/>
    <property type="project" value="UniProtKB-SubCell"/>
</dbReference>
<dbReference type="GO" id="GO:0009379">
    <property type="term" value="C:Holliday junction helicase complex"/>
    <property type="evidence" value="ECO:0007669"/>
    <property type="project" value="InterPro"/>
</dbReference>
<dbReference type="GO" id="GO:0048476">
    <property type="term" value="C:Holliday junction resolvase complex"/>
    <property type="evidence" value="ECO:0007669"/>
    <property type="project" value="UniProtKB-UniRule"/>
</dbReference>
<dbReference type="GO" id="GO:0005524">
    <property type="term" value="F:ATP binding"/>
    <property type="evidence" value="ECO:0007669"/>
    <property type="project" value="InterPro"/>
</dbReference>
<dbReference type="GO" id="GO:0000400">
    <property type="term" value="F:four-way junction DNA binding"/>
    <property type="evidence" value="ECO:0007669"/>
    <property type="project" value="UniProtKB-UniRule"/>
</dbReference>
<dbReference type="GO" id="GO:0009378">
    <property type="term" value="F:four-way junction helicase activity"/>
    <property type="evidence" value="ECO:0007669"/>
    <property type="project" value="InterPro"/>
</dbReference>
<dbReference type="GO" id="GO:0006310">
    <property type="term" value="P:DNA recombination"/>
    <property type="evidence" value="ECO:0007669"/>
    <property type="project" value="UniProtKB-UniRule"/>
</dbReference>
<dbReference type="GO" id="GO:0006281">
    <property type="term" value="P:DNA repair"/>
    <property type="evidence" value="ECO:0007669"/>
    <property type="project" value="UniProtKB-UniRule"/>
</dbReference>
<dbReference type="CDD" id="cd14332">
    <property type="entry name" value="UBA_RuvA_C"/>
    <property type="match status" value="1"/>
</dbReference>
<dbReference type="Gene3D" id="1.10.150.20">
    <property type="entry name" value="5' to 3' exonuclease, C-terminal subdomain"/>
    <property type="match status" value="1"/>
</dbReference>
<dbReference type="Gene3D" id="1.10.8.10">
    <property type="entry name" value="DNA helicase RuvA subunit, C-terminal domain"/>
    <property type="match status" value="1"/>
</dbReference>
<dbReference type="Gene3D" id="2.40.50.140">
    <property type="entry name" value="Nucleic acid-binding proteins"/>
    <property type="match status" value="1"/>
</dbReference>
<dbReference type="HAMAP" id="MF_00031">
    <property type="entry name" value="DNA_HJ_migration_RuvA"/>
    <property type="match status" value="1"/>
</dbReference>
<dbReference type="InterPro" id="IPR013849">
    <property type="entry name" value="DNA_helicase_Holl-junc_RuvA_I"/>
</dbReference>
<dbReference type="InterPro" id="IPR003583">
    <property type="entry name" value="Hlx-hairpin-Hlx_DNA-bd_motif"/>
</dbReference>
<dbReference type="InterPro" id="IPR012340">
    <property type="entry name" value="NA-bd_OB-fold"/>
</dbReference>
<dbReference type="InterPro" id="IPR000085">
    <property type="entry name" value="RuvA"/>
</dbReference>
<dbReference type="InterPro" id="IPR010994">
    <property type="entry name" value="RuvA_2-like"/>
</dbReference>
<dbReference type="InterPro" id="IPR011114">
    <property type="entry name" value="RuvA_C"/>
</dbReference>
<dbReference type="InterPro" id="IPR036267">
    <property type="entry name" value="RuvA_C_sf"/>
</dbReference>
<dbReference type="NCBIfam" id="TIGR00084">
    <property type="entry name" value="ruvA"/>
    <property type="match status" value="1"/>
</dbReference>
<dbReference type="Pfam" id="PF14520">
    <property type="entry name" value="HHH_5"/>
    <property type="match status" value="1"/>
</dbReference>
<dbReference type="Pfam" id="PF07499">
    <property type="entry name" value="RuvA_C"/>
    <property type="match status" value="1"/>
</dbReference>
<dbReference type="Pfam" id="PF01330">
    <property type="entry name" value="RuvA_N"/>
    <property type="match status" value="1"/>
</dbReference>
<dbReference type="SMART" id="SM00278">
    <property type="entry name" value="HhH1"/>
    <property type="match status" value="2"/>
</dbReference>
<dbReference type="SUPFAM" id="SSF46929">
    <property type="entry name" value="DNA helicase RuvA subunit, C-terminal domain"/>
    <property type="match status" value="1"/>
</dbReference>
<dbReference type="SUPFAM" id="SSF50249">
    <property type="entry name" value="Nucleic acid-binding proteins"/>
    <property type="match status" value="1"/>
</dbReference>
<dbReference type="SUPFAM" id="SSF47781">
    <property type="entry name" value="RuvA domain 2-like"/>
    <property type="match status" value="1"/>
</dbReference>
<evidence type="ECO:0000255" key="1">
    <source>
        <dbReference type="HAMAP-Rule" id="MF_00031"/>
    </source>
</evidence>
<organism>
    <name type="scientific">Clostridium botulinum (strain ATCC 19397 / Type A)</name>
    <dbReference type="NCBI Taxonomy" id="441770"/>
    <lineage>
        <taxon>Bacteria</taxon>
        <taxon>Bacillati</taxon>
        <taxon>Bacillota</taxon>
        <taxon>Clostridia</taxon>
        <taxon>Eubacteriales</taxon>
        <taxon>Clostridiaceae</taxon>
        <taxon>Clostridium</taxon>
    </lineage>
</organism>
<name>RUVA_CLOB1</name>
<gene>
    <name evidence="1" type="primary">ruvA</name>
    <name type="ordered locus">CLB_3100</name>
</gene>
<accession>A7FY20</accession>